<evidence type="ECO:0000255" key="1">
    <source>
        <dbReference type="HAMAP-Rule" id="MF_01813"/>
    </source>
</evidence>
<keyword id="KW-0474">Menaquinone biosynthesis</keyword>
<keyword id="KW-0489">Methyltransferase</keyword>
<keyword id="KW-0949">S-adenosyl-L-methionine</keyword>
<keyword id="KW-0808">Transferase</keyword>
<keyword id="KW-0831">Ubiquinone biosynthesis</keyword>
<organism>
    <name type="scientific">Shewanella halifaxensis (strain HAW-EB4)</name>
    <dbReference type="NCBI Taxonomy" id="458817"/>
    <lineage>
        <taxon>Bacteria</taxon>
        <taxon>Pseudomonadati</taxon>
        <taxon>Pseudomonadota</taxon>
        <taxon>Gammaproteobacteria</taxon>
        <taxon>Alteromonadales</taxon>
        <taxon>Shewanellaceae</taxon>
        <taxon>Shewanella</taxon>
    </lineage>
</organism>
<dbReference type="EC" id="2.1.1.163" evidence="1"/>
<dbReference type="EC" id="2.1.1.201" evidence="1"/>
<dbReference type="EMBL" id="CP000931">
    <property type="protein sequence ID" value="ABZ78419.1"/>
    <property type="molecule type" value="Genomic_DNA"/>
</dbReference>
<dbReference type="RefSeq" id="WP_012278936.1">
    <property type="nucleotide sequence ID" value="NC_010334.1"/>
</dbReference>
<dbReference type="SMR" id="B0TJ16"/>
<dbReference type="STRING" id="458817.Shal_3879"/>
<dbReference type="KEGG" id="shl:Shal_3879"/>
<dbReference type="eggNOG" id="COG2226">
    <property type="taxonomic scope" value="Bacteria"/>
</dbReference>
<dbReference type="HOGENOM" id="CLU_037990_0_0_6"/>
<dbReference type="OrthoDB" id="9808140at2"/>
<dbReference type="UniPathway" id="UPA00079">
    <property type="reaction ID" value="UER00169"/>
</dbReference>
<dbReference type="UniPathway" id="UPA00232"/>
<dbReference type="Proteomes" id="UP000001317">
    <property type="component" value="Chromosome"/>
</dbReference>
<dbReference type="GO" id="GO:0008425">
    <property type="term" value="F:2-methoxy-6-polyprenyl-1,4-benzoquinol methyltransferase activity"/>
    <property type="evidence" value="ECO:0007669"/>
    <property type="project" value="UniProtKB-UniRule"/>
</dbReference>
<dbReference type="GO" id="GO:0043770">
    <property type="term" value="F:demethylmenaquinone methyltransferase activity"/>
    <property type="evidence" value="ECO:0007669"/>
    <property type="project" value="UniProtKB-UniRule"/>
</dbReference>
<dbReference type="GO" id="GO:0009060">
    <property type="term" value="P:aerobic respiration"/>
    <property type="evidence" value="ECO:0007669"/>
    <property type="project" value="UniProtKB-UniRule"/>
</dbReference>
<dbReference type="GO" id="GO:0009234">
    <property type="term" value="P:menaquinone biosynthetic process"/>
    <property type="evidence" value="ECO:0007669"/>
    <property type="project" value="UniProtKB-UniRule"/>
</dbReference>
<dbReference type="GO" id="GO:0032259">
    <property type="term" value="P:methylation"/>
    <property type="evidence" value="ECO:0007669"/>
    <property type="project" value="UniProtKB-KW"/>
</dbReference>
<dbReference type="CDD" id="cd02440">
    <property type="entry name" value="AdoMet_MTases"/>
    <property type="match status" value="1"/>
</dbReference>
<dbReference type="FunFam" id="3.40.50.150:FF:000014">
    <property type="entry name" value="Ubiquinone/menaquinone biosynthesis C-methyltransferase UbiE"/>
    <property type="match status" value="1"/>
</dbReference>
<dbReference type="Gene3D" id="3.40.50.150">
    <property type="entry name" value="Vaccinia Virus protein VP39"/>
    <property type="match status" value="1"/>
</dbReference>
<dbReference type="HAMAP" id="MF_01813">
    <property type="entry name" value="MenG_UbiE_methyltr"/>
    <property type="match status" value="1"/>
</dbReference>
<dbReference type="InterPro" id="IPR029063">
    <property type="entry name" value="SAM-dependent_MTases_sf"/>
</dbReference>
<dbReference type="InterPro" id="IPR004033">
    <property type="entry name" value="UbiE/COQ5_MeTrFase"/>
</dbReference>
<dbReference type="InterPro" id="IPR023576">
    <property type="entry name" value="UbiE/COQ5_MeTrFase_CS"/>
</dbReference>
<dbReference type="NCBIfam" id="TIGR01934">
    <property type="entry name" value="MenG_MenH_UbiE"/>
    <property type="match status" value="1"/>
</dbReference>
<dbReference type="NCBIfam" id="NF001240">
    <property type="entry name" value="PRK00216.1-1"/>
    <property type="match status" value="1"/>
</dbReference>
<dbReference type="NCBIfam" id="NF001242">
    <property type="entry name" value="PRK00216.1-3"/>
    <property type="match status" value="1"/>
</dbReference>
<dbReference type="NCBIfam" id="NF001244">
    <property type="entry name" value="PRK00216.1-5"/>
    <property type="match status" value="1"/>
</dbReference>
<dbReference type="PANTHER" id="PTHR43591:SF24">
    <property type="entry name" value="2-METHOXY-6-POLYPRENYL-1,4-BENZOQUINOL METHYLASE, MITOCHONDRIAL"/>
    <property type="match status" value="1"/>
</dbReference>
<dbReference type="PANTHER" id="PTHR43591">
    <property type="entry name" value="METHYLTRANSFERASE"/>
    <property type="match status" value="1"/>
</dbReference>
<dbReference type="Pfam" id="PF01209">
    <property type="entry name" value="Ubie_methyltran"/>
    <property type="match status" value="1"/>
</dbReference>
<dbReference type="SUPFAM" id="SSF53335">
    <property type="entry name" value="S-adenosyl-L-methionine-dependent methyltransferases"/>
    <property type="match status" value="1"/>
</dbReference>
<dbReference type="PROSITE" id="PS51608">
    <property type="entry name" value="SAM_MT_UBIE"/>
    <property type="match status" value="1"/>
</dbReference>
<dbReference type="PROSITE" id="PS01183">
    <property type="entry name" value="UBIE_1"/>
    <property type="match status" value="1"/>
</dbReference>
<dbReference type="PROSITE" id="PS01184">
    <property type="entry name" value="UBIE_2"/>
    <property type="match status" value="1"/>
</dbReference>
<accession>B0TJ16</accession>
<sequence>MSEDTSNSTHFGYKTIEAEKKADLVAGVFHSVAAKYDIMNDVMSFGIHRMWKRFTIESAGARPGMKVLDLAGGTGDLTAKFSRIIGDTGQVTLADINDSMLKVGREKLRDKGIVGNVNYVQANAEALPFPDNHFDIITIAFGLRNVTDKDAAIASMLRVLKPGGKLLVLEFSKPQHDIMRKVYDLYSFKVLPKMGSLITKDADSYEYLAESIRMHPDQDTLKQMMEDAGFEQVNYTNMTDGIVALHKGYKF</sequence>
<proteinExistence type="inferred from homology"/>
<feature type="chain" id="PRO_1000088296" description="Ubiquinone/menaquinone biosynthesis C-methyltransferase UbiE">
    <location>
        <begin position="1"/>
        <end position="251"/>
    </location>
</feature>
<feature type="binding site" evidence="1">
    <location>
        <position position="74"/>
    </location>
    <ligand>
        <name>S-adenosyl-L-methionine</name>
        <dbReference type="ChEBI" id="CHEBI:59789"/>
    </ligand>
</feature>
<feature type="binding site" evidence="1">
    <location>
        <position position="95"/>
    </location>
    <ligand>
        <name>S-adenosyl-L-methionine</name>
        <dbReference type="ChEBI" id="CHEBI:59789"/>
    </ligand>
</feature>
<feature type="binding site" evidence="1">
    <location>
        <begin position="123"/>
        <end position="124"/>
    </location>
    <ligand>
        <name>S-adenosyl-L-methionine</name>
        <dbReference type="ChEBI" id="CHEBI:59789"/>
    </ligand>
</feature>
<reference key="1">
    <citation type="submission" date="2008-01" db="EMBL/GenBank/DDBJ databases">
        <title>Complete sequence of Shewanella halifaxensis HAW-EB4.</title>
        <authorList>
            <consortium name="US DOE Joint Genome Institute"/>
            <person name="Copeland A."/>
            <person name="Lucas S."/>
            <person name="Lapidus A."/>
            <person name="Glavina del Rio T."/>
            <person name="Dalin E."/>
            <person name="Tice H."/>
            <person name="Bruce D."/>
            <person name="Goodwin L."/>
            <person name="Pitluck S."/>
            <person name="Sims D."/>
            <person name="Brettin T."/>
            <person name="Detter J.C."/>
            <person name="Han C."/>
            <person name="Kuske C.R."/>
            <person name="Schmutz J."/>
            <person name="Larimer F."/>
            <person name="Land M."/>
            <person name="Hauser L."/>
            <person name="Kyrpides N."/>
            <person name="Kim E."/>
            <person name="Zhao J.-S."/>
            <person name="Richardson P."/>
        </authorList>
    </citation>
    <scope>NUCLEOTIDE SEQUENCE [LARGE SCALE GENOMIC DNA]</scope>
    <source>
        <strain>HAW-EB4</strain>
    </source>
</reference>
<gene>
    <name evidence="1" type="primary">ubiE</name>
    <name type="ordered locus">Shal_3879</name>
</gene>
<comment type="function">
    <text evidence="1">Methyltransferase required for the conversion of demethylmenaquinol (DMKH2) to menaquinol (MKH2) and the conversion of 2-polyprenyl-6-methoxy-1,4-benzoquinol (DDMQH2) to 2-polyprenyl-3-methyl-6-methoxy-1,4-benzoquinol (DMQH2).</text>
</comment>
<comment type="catalytic activity">
    <reaction evidence="1">
        <text>a 2-demethylmenaquinol + S-adenosyl-L-methionine = a menaquinol + S-adenosyl-L-homocysteine + H(+)</text>
        <dbReference type="Rhea" id="RHEA:42640"/>
        <dbReference type="Rhea" id="RHEA-COMP:9539"/>
        <dbReference type="Rhea" id="RHEA-COMP:9563"/>
        <dbReference type="ChEBI" id="CHEBI:15378"/>
        <dbReference type="ChEBI" id="CHEBI:18151"/>
        <dbReference type="ChEBI" id="CHEBI:55437"/>
        <dbReference type="ChEBI" id="CHEBI:57856"/>
        <dbReference type="ChEBI" id="CHEBI:59789"/>
        <dbReference type="EC" id="2.1.1.163"/>
    </reaction>
</comment>
<comment type="catalytic activity">
    <reaction evidence="1">
        <text>a 2-methoxy-6-(all-trans-polyprenyl)benzene-1,4-diol + S-adenosyl-L-methionine = a 5-methoxy-2-methyl-3-(all-trans-polyprenyl)benzene-1,4-diol + S-adenosyl-L-homocysteine + H(+)</text>
        <dbReference type="Rhea" id="RHEA:28286"/>
        <dbReference type="Rhea" id="RHEA-COMP:10858"/>
        <dbReference type="Rhea" id="RHEA-COMP:10859"/>
        <dbReference type="ChEBI" id="CHEBI:15378"/>
        <dbReference type="ChEBI" id="CHEBI:57856"/>
        <dbReference type="ChEBI" id="CHEBI:59789"/>
        <dbReference type="ChEBI" id="CHEBI:84166"/>
        <dbReference type="ChEBI" id="CHEBI:84167"/>
        <dbReference type="EC" id="2.1.1.201"/>
    </reaction>
</comment>
<comment type="pathway">
    <text evidence="1">Quinol/quinone metabolism; menaquinone biosynthesis; menaquinol from 1,4-dihydroxy-2-naphthoate: step 2/2.</text>
</comment>
<comment type="pathway">
    <text evidence="1">Cofactor biosynthesis; ubiquinone biosynthesis.</text>
</comment>
<comment type="similarity">
    <text evidence="1">Belongs to the class I-like SAM-binding methyltransferase superfamily. MenG/UbiE family.</text>
</comment>
<protein>
    <recommendedName>
        <fullName evidence="1">Ubiquinone/menaquinone biosynthesis C-methyltransferase UbiE</fullName>
        <ecNumber evidence="1">2.1.1.163</ecNumber>
        <ecNumber evidence="1">2.1.1.201</ecNumber>
    </recommendedName>
    <alternativeName>
        <fullName evidence="1">2-methoxy-6-polyprenyl-1,4-benzoquinol methylase</fullName>
    </alternativeName>
    <alternativeName>
        <fullName evidence="1">Demethylmenaquinone methyltransferase</fullName>
    </alternativeName>
</protein>
<name>UBIE_SHEHH</name>